<sequence length="432" mass="48332">MSLNIETTQGLERRVAITVPTEIVSKAVREEFKRAAKNVRVDGFRKGHVPAHIIEQRFGASIRQDVLNDLLPRHFFNAVIAEKINIAGRPTFAIETFEEGKDLVFTATFEVYPEVKLQGLENIKVEKPTVEITEADIDKMIDVLRKQQATWAESQDVVKADDRVTIDFVGSVDGEEFEGGKATDFVLFMGQGRMIPGFEEGIVGHKAGEQFDIDVTFPAEYHAENLKGKAAKFAITLKKIENMVLPELTDEFVAKFGPNTKSVADLRAEIRKNMERELKNALVSRVKQQVINGLIEQNPIDVPVSAVEEEINVLRNQAAQRFGGNAQQTAQLPRELFEAEATRRVQVGLLFSEVIKSNELKADEERAKAMIADIASAYEQPAEVVEYYSKNEELMNNIRNVVLEEQAVDAVLAKAQVTEKVSSFDEIMNPQA</sequence>
<proteinExistence type="inferred from homology"/>
<organism>
    <name type="scientific">Haemophilus influenzae (strain ATCC 51907 / DSM 11121 / KW20 / Rd)</name>
    <dbReference type="NCBI Taxonomy" id="71421"/>
    <lineage>
        <taxon>Bacteria</taxon>
        <taxon>Pseudomonadati</taxon>
        <taxon>Pseudomonadota</taxon>
        <taxon>Gammaproteobacteria</taxon>
        <taxon>Pasteurellales</taxon>
        <taxon>Pasteurellaceae</taxon>
        <taxon>Haemophilus</taxon>
    </lineage>
</organism>
<comment type="function">
    <text evidence="1">Involved in protein export. Acts as a chaperone by maintaining the newly synthesized protein in an open conformation. Functions as a peptidyl-prolyl cis-trans isomerase (By similarity).</text>
</comment>
<comment type="catalytic activity">
    <reaction>
        <text>[protein]-peptidylproline (omega=180) = [protein]-peptidylproline (omega=0)</text>
        <dbReference type="Rhea" id="RHEA:16237"/>
        <dbReference type="Rhea" id="RHEA-COMP:10747"/>
        <dbReference type="Rhea" id="RHEA-COMP:10748"/>
        <dbReference type="ChEBI" id="CHEBI:83833"/>
        <dbReference type="ChEBI" id="CHEBI:83834"/>
        <dbReference type="EC" id="5.2.1.8"/>
    </reaction>
</comment>
<comment type="subcellular location">
    <subcellularLocation>
        <location>Cytoplasm</location>
    </subcellularLocation>
    <text evidence="1">About half TF is bound to the ribosome near the polypeptide exit tunnel while the other half is free in the cytoplasm.</text>
</comment>
<comment type="domain">
    <text evidence="1">Consists of 3 domains; the N-terminus binds the ribosome, the middle domain has PPIase activity, while the C-terminus has intrinsic chaperone activity on its own.</text>
</comment>
<comment type="similarity">
    <text evidence="2">Belongs to the FKBP-type PPIase family. Tig subfamily.</text>
</comment>
<accession>P44837</accession>
<evidence type="ECO:0000250" key="1"/>
<evidence type="ECO:0000305" key="2"/>
<gene>
    <name type="primary">tig</name>
    <name type="ordered locus">HI_0713</name>
</gene>
<keyword id="KW-0131">Cell cycle</keyword>
<keyword id="KW-0132">Cell division</keyword>
<keyword id="KW-0143">Chaperone</keyword>
<keyword id="KW-0963">Cytoplasm</keyword>
<keyword id="KW-0413">Isomerase</keyword>
<keyword id="KW-1185">Reference proteome</keyword>
<keyword id="KW-0697">Rotamase</keyword>
<dbReference type="EC" id="5.2.1.8"/>
<dbReference type="EMBL" id="L42023">
    <property type="protein sequence ID" value="AAC22370.1"/>
    <property type="molecule type" value="Genomic_DNA"/>
</dbReference>
<dbReference type="PIR" id="C64088">
    <property type="entry name" value="C64088"/>
</dbReference>
<dbReference type="RefSeq" id="NP_438871.1">
    <property type="nucleotide sequence ID" value="NC_000907.1"/>
</dbReference>
<dbReference type="SMR" id="P44837"/>
<dbReference type="STRING" id="71421.HI_0713"/>
<dbReference type="EnsemblBacteria" id="AAC22370">
    <property type="protein sequence ID" value="AAC22370"/>
    <property type="gene ID" value="HI_0713"/>
</dbReference>
<dbReference type="KEGG" id="hin:HI_0713"/>
<dbReference type="PATRIC" id="fig|71421.8.peg.745"/>
<dbReference type="eggNOG" id="COG0544">
    <property type="taxonomic scope" value="Bacteria"/>
</dbReference>
<dbReference type="HOGENOM" id="CLU_033058_2_0_6"/>
<dbReference type="OrthoDB" id="9767721at2"/>
<dbReference type="PhylomeDB" id="P44837"/>
<dbReference type="BioCyc" id="HINF71421:G1GJ1-747-MONOMER"/>
<dbReference type="Proteomes" id="UP000000579">
    <property type="component" value="Chromosome"/>
</dbReference>
<dbReference type="GO" id="GO:0005737">
    <property type="term" value="C:cytoplasm"/>
    <property type="evidence" value="ECO:0007669"/>
    <property type="project" value="UniProtKB-SubCell"/>
</dbReference>
<dbReference type="GO" id="GO:0003755">
    <property type="term" value="F:peptidyl-prolyl cis-trans isomerase activity"/>
    <property type="evidence" value="ECO:0000318"/>
    <property type="project" value="GO_Central"/>
</dbReference>
<dbReference type="GO" id="GO:0044183">
    <property type="term" value="F:protein folding chaperone"/>
    <property type="evidence" value="ECO:0000318"/>
    <property type="project" value="GO_Central"/>
</dbReference>
<dbReference type="GO" id="GO:0043022">
    <property type="term" value="F:ribosome binding"/>
    <property type="evidence" value="ECO:0000318"/>
    <property type="project" value="GO_Central"/>
</dbReference>
<dbReference type="GO" id="GO:0051083">
    <property type="term" value="P:'de novo' cotranslational protein folding"/>
    <property type="evidence" value="ECO:0000318"/>
    <property type="project" value="GO_Central"/>
</dbReference>
<dbReference type="GO" id="GO:0051301">
    <property type="term" value="P:cell division"/>
    <property type="evidence" value="ECO:0007669"/>
    <property type="project" value="UniProtKB-KW"/>
</dbReference>
<dbReference type="GO" id="GO:0061077">
    <property type="term" value="P:chaperone-mediated protein folding"/>
    <property type="evidence" value="ECO:0000318"/>
    <property type="project" value="GO_Central"/>
</dbReference>
<dbReference type="GO" id="GO:0015031">
    <property type="term" value="P:protein transport"/>
    <property type="evidence" value="ECO:0007669"/>
    <property type="project" value="UniProtKB-UniRule"/>
</dbReference>
<dbReference type="GO" id="GO:0043335">
    <property type="term" value="P:protein unfolding"/>
    <property type="evidence" value="ECO:0000318"/>
    <property type="project" value="GO_Central"/>
</dbReference>
<dbReference type="FunFam" id="3.10.50.40:FF:000001">
    <property type="entry name" value="Trigger factor"/>
    <property type="match status" value="1"/>
</dbReference>
<dbReference type="Gene3D" id="3.10.50.40">
    <property type="match status" value="1"/>
</dbReference>
<dbReference type="Gene3D" id="3.30.70.1050">
    <property type="entry name" value="Trigger factor ribosome-binding domain"/>
    <property type="match status" value="1"/>
</dbReference>
<dbReference type="Gene3D" id="1.10.3120.10">
    <property type="entry name" value="Trigger factor, C-terminal domain"/>
    <property type="match status" value="1"/>
</dbReference>
<dbReference type="HAMAP" id="MF_00303">
    <property type="entry name" value="Trigger_factor_Tig"/>
    <property type="match status" value="1"/>
</dbReference>
<dbReference type="InterPro" id="IPR046357">
    <property type="entry name" value="PPIase_dom_sf"/>
</dbReference>
<dbReference type="InterPro" id="IPR001179">
    <property type="entry name" value="PPIase_FKBP_dom"/>
</dbReference>
<dbReference type="InterPro" id="IPR005215">
    <property type="entry name" value="Trig_fac"/>
</dbReference>
<dbReference type="InterPro" id="IPR008880">
    <property type="entry name" value="Trigger_fac_C"/>
</dbReference>
<dbReference type="InterPro" id="IPR037041">
    <property type="entry name" value="Trigger_fac_C_sf"/>
</dbReference>
<dbReference type="InterPro" id="IPR008881">
    <property type="entry name" value="Trigger_fac_ribosome-bd_bac"/>
</dbReference>
<dbReference type="InterPro" id="IPR036611">
    <property type="entry name" value="Trigger_fac_ribosome-bd_sf"/>
</dbReference>
<dbReference type="InterPro" id="IPR027304">
    <property type="entry name" value="Trigger_fact/SurA_dom_sf"/>
</dbReference>
<dbReference type="NCBIfam" id="TIGR00115">
    <property type="entry name" value="tig"/>
    <property type="match status" value="1"/>
</dbReference>
<dbReference type="PANTHER" id="PTHR30560">
    <property type="entry name" value="TRIGGER FACTOR CHAPERONE AND PEPTIDYL-PROLYL CIS/TRANS ISOMERASE"/>
    <property type="match status" value="1"/>
</dbReference>
<dbReference type="PANTHER" id="PTHR30560:SF3">
    <property type="entry name" value="TRIGGER FACTOR-LIKE PROTEIN TIG, CHLOROPLASTIC"/>
    <property type="match status" value="1"/>
</dbReference>
<dbReference type="Pfam" id="PF00254">
    <property type="entry name" value="FKBP_C"/>
    <property type="match status" value="1"/>
</dbReference>
<dbReference type="Pfam" id="PF05698">
    <property type="entry name" value="Trigger_C"/>
    <property type="match status" value="1"/>
</dbReference>
<dbReference type="Pfam" id="PF05697">
    <property type="entry name" value="Trigger_N"/>
    <property type="match status" value="1"/>
</dbReference>
<dbReference type="PIRSF" id="PIRSF003095">
    <property type="entry name" value="Trigger_factor"/>
    <property type="match status" value="1"/>
</dbReference>
<dbReference type="SUPFAM" id="SSF54534">
    <property type="entry name" value="FKBP-like"/>
    <property type="match status" value="1"/>
</dbReference>
<dbReference type="SUPFAM" id="SSF109998">
    <property type="entry name" value="Triger factor/SurA peptide-binding domain-like"/>
    <property type="match status" value="1"/>
</dbReference>
<dbReference type="SUPFAM" id="SSF102735">
    <property type="entry name" value="Trigger factor ribosome-binding domain"/>
    <property type="match status" value="1"/>
</dbReference>
<dbReference type="PROSITE" id="PS50059">
    <property type="entry name" value="FKBP_PPIASE"/>
    <property type="match status" value="1"/>
</dbReference>
<name>TIG_HAEIN</name>
<reference key="1">
    <citation type="journal article" date="1995" name="Science">
        <title>Whole-genome random sequencing and assembly of Haemophilus influenzae Rd.</title>
        <authorList>
            <person name="Fleischmann R.D."/>
            <person name="Adams M.D."/>
            <person name="White O."/>
            <person name="Clayton R.A."/>
            <person name="Kirkness E.F."/>
            <person name="Kerlavage A.R."/>
            <person name="Bult C.J."/>
            <person name="Tomb J.-F."/>
            <person name="Dougherty B.A."/>
            <person name="Merrick J.M."/>
            <person name="McKenney K."/>
            <person name="Sutton G.G."/>
            <person name="FitzHugh W."/>
            <person name="Fields C.A."/>
            <person name="Gocayne J.D."/>
            <person name="Scott J.D."/>
            <person name="Shirley R."/>
            <person name="Liu L.-I."/>
            <person name="Glodek A."/>
            <person name="Kelley J.M."/>
            <person name="Weidman J.F."/>
            <person name="Phillips C.A."/>
            <person name="Spriggs T."/>
            <person name="Hedblom E."/>
            <person name="Cotton M.D."/>
            <person name="Utterback T.R."/>
            <person name="Hanna M.C."/>
            <person name="Nguyen D.T."/>
            <person name="Saudek D.M."/>
            <person name="Brandon R.C."/>
            <person name="Fine L.D."/>
            <person name="Fritchman J.L."/>
            <person name="Fuhrmann J.L."/>
            <person name="Geoghagen N.S.M."/>
            <person name="Gnehm C.L."/>
            <person name="McDonald L.A."/>
            <person name="Small K.V."/>
            <person name="Fraser C.M."/>
            <person name="Smith H.O."/>
            <person name="Venter J.C."/>
        </authorList>
    </citation>
    <scope>NUCLEOTIDE SEQUENCE [LARGE SCALE GENOMIC DNA]</scope>
    <source>
        <strain>ATCC 51907 / DSM 11121 / KW20 / Rd</strain>
    </source>
</reference>
<protein>
    <recommendedName>
        <fullName>Trigger factor</fullName>
        <shortName>TF</shortName>
        <ecNumber>5.2.1.8</ecNumber>
    </recommendedName>
    <alternativeName>
        <fullName>PPIase</fullName>
    </alternativeName>
</protein>
<feature type="chain" id="PRO_0000179361" description="Trigger factor">
    <location>
        <begin position="1"/>
        <end position="432"/>
    </location>
</feature>
<feature type="domain" description="PPIase FKBP-type">
    <location>
        <begin position="161"/>
        <end position="246"/>
    </location>
</feature>